<gene>
    <name evidence="1" type="primary">menD</name>
    <name type="ordered locus">EF_0448</name>
</gene>
<protein>
    <recommendedName>
        <fullName evidence="1">2-succinyl-5-enolpyruvyl-6-hydroxy-3-cyclohexene-1-carboxylate synthase</fullName>
        <shortName evidence="1">SEPHCHC synthase</shortName>
        <ecNumber evidence="1">2.2.1.9</ecNumber>
    </recommendedName>
    <alternativeName>
        <fullName evidence="1">Menaquinone biosynthesis protein MenD</fullName>
    </alternativeName>
</protein>
<sequence length="577" mass="64220">MNHQETMTDYLMAFIEGLKNSGVEQAVISPGSRSTPLALLLHRETAIQTFVDVDERSAAFFALGLSKASQKPVVLLCTSGTAAANYYPAICEANISHVPLVVLTTDRPHELRQVGAPQAMDQLQMYQNHVKLFVEMALPEATEEMLNYAYWQGAKGAAFAQQTPAAPVHLNFPLREPLLPDLERKTKSSQQTALFAGQSILSTEQVQQLADQWYQKNGVLVVGGSHTEEEATLFIQLAEALQWPLLADPLANIVTHGQNSEVVIAHSDLFLNVATLPQEPEVVVRFGSLPISKNIMLWLKRLATTETAFYFVDENGQWQEQLKKSQTVIQAKETTFVEQLLTVVKPTEATWLAQWLLLEKTVSEVLLETLNATELNETTASLAVHQTMKENGQLFVSNSMAIRYLDRFMDSRPYRMFGNRGINGIDGIVSTALGMSAIAPTQQNVLLIGDLALYHDMNGLFLAKRYQLPLTIVLLNNNGGGIFSFLSQRTLREDDFEPLFGTPLDLDFSLVAELYGASYQEVKTIAELKQILQAAAEEPQFQVIEVKGNRQENVHLYESILAEIGRRVERQGISWNG</sequence>
<dbReference type="EC" id="2.2.1.9" evidence="1"/>
<dbReference type="EMBL" id="AE016830">
    <property type="protein sequence ID" value="AAO80303.1"/>
    <property type="molecule type" value="Genomic_DNA"/>
</dbReference>
<dbReference type="RefSeq" id="NP_814232.1">
    <property type="nucleotide sequence ID" value="NC_004668.1"/>
</dbReference>
<dbReference type="RefSeq" id="WP_002387681.1">
    <property type="nucleotide sequence ID" value="NZ_KE136524.1"/>
</dbReference>
<dbReference type="SMR" id="Q838J9"/>
<dbReference type="STRING" id="226185.EF_0448"/>
<dbReference type="DNASU" id="1199363"/>
<dbReference type="EnsemblBacteria" id="AAO80303">
    <property type="protein sequence ID" value="AAO80303"/>
    <property type="gene ID" value="EF_0448"/>
</dbReference>
<dbReference type="KEGG" id="efa:EF0448"/>
<dbReference type="PATRIC" id="fig|226185.45.peg.2887"/>
<dbReference type="eggNOG" id="COG1165">
    <property type="taxonomic scope" value="Bacteria"/>
</dbReference>
<dbReference type="HOGENOM" id="CLU_006051_3_0_9"/>
<dbReference type="BioCyc" id="MetaCyc:MONOMER-13857"/>
<dbReference type="UniPathway" id="UPA00079"/>
<dbReference type="UniPathway" id="UPA01057">
    <property type="reaction ID" value="UER00164"/>
</dbReference>
<dbReference type="Proteomes" id="UP000001415">
    <property type="component" value="Chromosome"/>
</dbReference>
<dbReference type="GO" id="GO:0070204">
    <property type="term" value="F:2-succinyl-5-enolpyruvyl-6-hydroxy-3-cyclohexene-1-carboxylic-acid synthase activity"/>
    <property type="evidence" value="ECO:0007669"/>
    <property type="project" value="UniProtKB-UniRule"/>
</dbReference>
<dbReference type="GO" id="GO:0000287">
    <property type="term" value="F:magnesium ion binding"/>
    <property type="evidence" value="ECO:0007669"/>
    <property type="project" value="UniProtKB-UniRule"/>
</dbReference>
<dbReference type="GO" id="GO:0030145">
    <property type="term" value="F:manganese ion binding"/>
    <property type="evidence" value="ECO:0007669"/>
    <property type="project" value="UniProtKB-UniRule"/>
</dbReference>
<dbReference type="GO" id="GO:0030976">
    <property type="term" value="F:thiamine pyrophosphate binding"/>
    <property type="evidence" value="ECO:0007669"/>
    <property type="project" value="UniProtKB-UniRule"/>
</dbReference>
<dbReference type="GO" id="GO:0009234">
    <property type="term" value="P:menaquinone biosynthetic process"/>
    <property type="evidence" value="ECO:0007669"/>
    <property type="project" value="UniProtKB-UniRule"/>
</dbReference>
<dbReference type="CDD" id="cd07037">
    <property type="entry name" value="TPP_PYR_MenD"/>
    <property type="match status" value="1"/>
</dbReference>
<dbReference type="CDD" id="cd02009">
    <property type="entry name" value="TPP_SHCHC_synthase"/>
    <property type="match status" value="1"/>
</dbReference>
<dbReference type="Gene3D" id="3.40.50.970">
    <property type="match status" value="2"/>
</dbReference>
<dbReference type="Gene3D" id="3.40.50.1220">
    <property type="entry name" value="TPP-binding domain"/>
    <property type="match status" value="1"/>
</dbReference>
<dbReference type="HAMAP" id="MF_01659">
    <property type="entry name" value="MenD"/>
    <property type="match status" value="1"/>
</dbReference>
<dbReference type="InterPro" id="IPR029035">
    <property type="entry name" value="DHS-like_NAD/FAD-binding_dom"/>
</dbReference>
<dbReference type="InterPro" id="IPR004433">
    <property type="entry name" value="MenaQ_synth_MenD"/>
</dbReference>
<dbReference type="InterPro" id="IPR032264">
    <property type="entry name" value="MenD_middle"/>
</dbReference>
<dbReference type="InterPro" id="IPR029061">
    <property type="entry name" value="THDP-binding"/>
</dbReference>
<dbReference type="InterPro" id="IPR012001">
    <property type="entry name" value="Thiamin_PyroP_enz_TPP-bd_dom"/>
</dbReference>
<dbReference type="InterPro" id="IPR011766">
    <property type="entry name" value="TPP_enzyme_TPP-bd"/>
</dbReference>
<dbReference type="NCBIfam" id="TIGR00173">
    <property type="entry name" value="menD"/>
    <property type="match status" value="1"/>
</dbReference>
<dbReference type="PANTHER" id="PTHR42916">
    <property type="entry name" value="2-SUCCINYL-5-ENOLPYRUVYL-6-HYDROXY-3-CYCLOHEXENE-1-CARBOXYLATE SYNTHASE"/>
    <property type="match status" value="1"/>
</dbReference>
<dbReference type="PANTHER" id="PTHR42916:SF1">
    <property type="entry name" value="PROTEIN PHYLLO, CHLOROPLASTIC"/>
    <property type="match status" value="1"/>
</dbReference>
<dbReference type="Pfam" id="PF02775">
    <property type="entry name" value="TPP_enzyme_C"/>
    <property type="match status" value="1"/>
</dbReference>
<dbReference type="Pfam" id="PF16582">
    <property type="entry name" value="TPP_enzyme_M_2"/>
    <property type="match status" value="1"/>
</dbReference>
<dbReference type="Pfam" id="PF02776">
    <property type="entry name" value="TPP_enzyme_N"/>
    <property type="match status" value="1"/>
</dbReference>
<dbReference type="PIRSF" id="PIRSF004983">
    <property type="entry name" value="MenD"/>
    <property type="match status" value="1"/>
</dbReference>
<dbReference type="SUPFAM" id="SSF52467">
    <property type="entry name" value="DHS-like NAD/FAD-binding domain"/>
    <property type="match status" value="1"/>
</dbReference>
<dbReference type="SUPFAM" id="SSF52518">
    <property type="entry name" value="Thiamin diphosphate-binding fold (THDP-binding)"/>
    <property type="match status" value="2"/>
</dbReference>
<name>MEND_ENTFA</name>
<proteinExistence type="inferred from homology"/>
<reference key="1">
    <citation type="journal article" date="2003" name="Science">
        <title>Role of mobile DNA in the evolution of vancomycin-resistant Enterococcus faecalis.</title>
        <authorList>
            <person name="Paulsen I.T."/>
            <person name="Banerjei L."/>
            <person name="Myers G.S.A."/>
            <person name="Nelson K.E."/>
            <person name="Seshadri R."/>
            <person name="Read T.D."/>
            <person name="Fouts D.E."/>
            <person name="Eisen J.A."/>
            <person name="Gill S.R."/>
            <person name="Heidelberg J.F."/>
            <person name="Tettelin H."/>
            <person name="Dodson R.J."/>
            <person name="Umayam L.A."/>
            <person name="Brinkac L.M."/>
            <person name="Beanan M.J."/>
            <person name="Daugherty S.C."/>
            <person name="DeBoy R.T."/>
            <person name="Durkin S.A."/>
            <person name="Kolonay J.F."/>
            <person name="Madupu R."/>
            <person name="Nelson W.C."/>
            <person name="Vamathevan J.J."/>
            <person name="Tran B."/>
            <person name="Upton J."/>
            <person name="Hansen T."/>
            <person name="Shetty J."/>
            <person name="Khouri H.M."/>
            <person name="Utterback T.R."/>
            <person name="Radune D."/>
            <person name="Ketchum K.A."/>
            <person name="Dougherty B.A."/>
            <person name="Fraser C.M."/>
        </authorList>
    </citation>
    <scope>NUCLEOTIDE SEQUENCE [LARGE SCALE GENOMIC DNA]</scope>
    <source>
        <strain>ATCC 700802 / V583</strain>
    </source>
</reference>
<evidence type="ECO:0000255" key="1">
    <source>
        <dbReference type="HAMAP-Rule" id="MF_01659"/>
    </source>
</evidence>
<accession>Q838J9</accession>
<organism>
    <name type="scientific">Enterococcus faecalis (strain ATCC 700802 / V583)</name>
    <dbReference type="NCBI Taxonomy" id="226185"/>
    <lineage>
        <taxon>Bacteria</taxon>
        <taxon>Bacillati</taxon>
        <taxon>Bacillota</taxon>
        <taxon>Bacilli</taxon>
        <taxon>Lactobacillales</taxon>
        <taxon>Enterococcaceae</taxon>
        <taxon>Enterococcus</taxon>
    </lineage>
</organism>
<keyword id="KW-0460">Magnesium</keyword>
<keyword id="KW-0464">Manganese</keyword>
<keyword id="KW-0474">Menaquinone biosynthesis</keyword>
<keyword id="KW-0479">Metal-binding</keyword>
<keyword id="KW-1185">Reference proteome</keyword>
<keyword id="KW-0786">Thiamine pyrophosphate</keyword>
<keyword id="KW-0808">Transferase</keyword>
<comment type="function">
    <text evidence="1">Catalyzes the thiamine diphosphate-dependent decarboxylation of 2-oxoglutarate and the subsequent addition of the resulting succinic semialdehyde-thiamine pyrophosphate anion to isochorismate to yield 2-succinyl-5-enolpyruvyl-6-hydroxy-3-cyclohexene-1-carboxylate (SEPHCHC).</text>
</comment>
<comment type="catalytic activity">
    <reaction evidence="1">
        <text>isochorismate + 2-oxoglutarate + H(+) = 5-enolpyruvoyl-6-hydroxy-2-succinyl-cyclohex-3-ene-1-carboxylate + CO2</text>
        <dbReference type="Rhea" id="RHEA:25593"/>
        <dbReference type="ChEBI" id="CHEBI:15378"/>
        <dbReference type="ChEBI" id="CHEBI:16526"/>
        <dbReference type="ChEBI" id="CHEBI:16810"/>
        <dbReference type="ChEBI" id="CHEBI:29780"/>
        <dbReference type="ChEBI" id="CHEBI:58818"/>
        <dbReference type="EC" id="2.2.1.9"/>
    </reaction>
</comment>
<comment type="cofactor">
    <cofactor evidence="1">
        <name>Mg(2+)</name>
        <dbReference type="ChEBI" id="CHEBI:18420"/>
    </cofactor>
    <cofactor evidence="1">
        <name>Mn(2+)</name>
        <dbReference type="ChEBI" id="CHEBI:29035"/>
    </cofactor>
</comment>
<comment type="cofactor">
    <cofactor evidence="1">
        <name>thiamine diphosphate</name>
        <dbReference type="ChEBI" id="CHEBI:58937"/>
    </cofactor>
    <text evidence="1">Binds 1 thiamine pyrophosphate per subunit.</text>
</comment>
<comment type="pathway">
    <text evidence="1">Quinol/quinone metabolism; 1,4-dihydroxy-2-naphthoate biosynthesis; 1,4-dihydroxy-2-naphthoate from chorismate: step 2/7.</text>
</comment>
<comment type="pathway">
    <text evidence="1">Quinol/quinone metabolism; menaquinone biosynthesis.</text>
</comment>
<comment type="subunit">
    <text evidence="1">Homodimer.</text>
</comment>
<comment type="similarity">
    <text evidence="1">Belongs to the TPP enzyme family. MenD subfamily.</text>
</comment>
<feature type="chain" id="PRO_0000341736" description="2-succinyl-5-enolpyruvyl-6-hydroxy-3-cyclohexene-1-carboxylate synthase">
    <location>
        <begin position="1"/>
        <end position="577"/>
    </location>
</feature>